<name>XY43A_HUMIN</name>
<dbReference type="EC" id="3.2.1.37" evidence="2"/>
<dbReference type="EC" id="3.2.1.55" evidence="2"/>
<dbReference type="EMBL" id="KC962400">
    <property type="protein sequence ID" value="AHC72382.1"/>
    <property type="molecule type" value="mRNA"/>
</dbReference>
<dbReference type="SMR" id="V9TNS0"/>
<dbReference type="GO" id="GO:0005576">
    <property type="term" value="C:extracellular region"/>
    <property type="evidence" value="ECO:0007669"/>
    <property type="project" value="UniProtKB-SubCell"/>
</dbReference>
<dbReference type="GO" id="GO:0009044">
    <property type="term" value="F:xylan 1,4-beta-xylosidase activity"/>
    <property type="evidence" value="ECO:0007669"/>
    <property type="project" value="UniProtKB-EC"/>
</dbReference>
<dbReference type="GO" id="GO:0000272">
    <property type="term" value="P:polysaccharide catabolic process"/>
    <property type="evidence" value="ECO:0007669"/>
    <property type="project" value="UniProtKB-KW"/>
</dbReference>
<dbReference type="CDD" id="cd18619">
    <property type="entry name" value="GH43_CoXyl43_like"/>
    <property type="match status" value="1"/>
</dbReference>
<dbReference type="Gene3D" id="2.115.10.20">
    <property type="entry name" value="Glycosyl hydrolase domain, family 43"/>
    <property type="match status" value="1"/>
</dbReference>
<dbReference type="InterPro" id="IPR006710">
    <property type="entry name" value="Glyco_hydro_43"/>
</dbReference>
<dbReference type="InterPro" id="IPR023296">
    <property type="entry name" value="Glyco_hydro_beta-prop_sf"/>
</dbReference>
<dbReference type="InterPro" id="IPR052176">
    <property type="entry name" value="Glycosyl_Hydrlase_43_Enz"/>
</dbReference>
<dbReference type="PANTHER" id="PTHR43772">
    <property type="entry name" value="ENDO-1,4-BETA-XYLANASE"/>
    <property type="match status" value="1"/>
</dbReference>
<dbReference type="PANTHER" id="PTHR43772:SF2">
    <property type="entry name" value="PUTATIVE (AFU_ORTHOLOGUE AFUA_2G04480)-RELATED"/>
    <property type="match status" value="1"/>
</dbReference>
<dbReference type="Pfam" id="PF04616">
    <property type="entry name" value="Glyco_hydro_43"/>
    <property type="match status" value="1"/>
</dbReference>
<dbReference type="SUPFAM" id="SSF75005">
    <property type="entry name" value="Arabinanase/levansucrase/invertase"/>
    <property type="match status" value="1"/>
</dbReference>
<accession>V9TNS0</accession>
<protein>
    <recommendedName>
        <fullName evidence="3">Xylosidase/arabinosidase 43A</fullName>
    </recommendedName>
    <domain>
        <recommendedName>
            <fullName evidence="3">Beta-xylosidase</fullName>
            <ecNumber evidence="2">3.2.1.37</ecNumber>
        </recommendedName>
        <alternativeName>
            <fullName evidence="3">1,4-beta-D-xylan xylohydrolase</fullName>
        </alternativeName>
        <alternativeName>
            <fullName evidence="3">Xylan 1,4-beta-xylosidase</fullName>
        </alternativeName>
    </domain>
    <domain>
        <recommendedName>
            <fullName evidence="3">Alpha-L-arabinofuranosidase</fullName>
            <shortName evidence="3">Arabinosidase</shortName>
            <ecNumber evidence="2">3.2.1.55</ecNumber>
        </recommendedName>
    </domain>
</protein>
<organism>
    <name type="scientific">Humicola insolens</name>
    <name type="common">Soft-rot fungus</name>
    <dbReference type="NCBI Taxonomy" id="85995"/>
    <lineage>
        <taxon>Eukaryota</taxon>
        <taxon>Fungi</taxon>
        <taxon>Dikarya</taxon>
        <taxon>Ascomycota</taxon>
        <taxon>Pezizomycotina</taxon>
        <taxon>Sordariomycetes</taxon>
        <taxon>Sordariomycetidae</taxon>
        <taxon>Sordariales</taxon>
        <taxon>Chaetomiaceae</taxon>
        <taxon>Mycothermus</taxon>
    </lineage>
</organism>
<feature type="chain" id="PRO_0000461849" description="Xylosidase/arabinosidase 43A">
    <location>
        <begin position="1"/>
        <end position="327"/>
    </location>
</feature>
<feature type="active site" description="Proton acceptor" evidence="1">
    <location>
        <position position="12"/>
    </location>
</feature>
<feature type="active site" description="Proton donor" evidence="1">
    <location>
        <position position="228"/>
    </location>
</feature>
<feature type="site" description="Important for catalytic activity, responsible for pKa modulation of the active site Glu and correct orientation of both the proton donor and substrate" evidence="1">
    <location>
        <position position="134"/>
    </location>
</feature>
<proteinExistence type="evidence at protein level"/>
<reference key="1">
    <citation type="journal article" date="2014" name="Food Chem.">
        <title>Two xylose-tolerant GH43 bifunctional ?-xylosidase/?-arabinosidases and one GH11 xylanase from Humicola insolens and their synergy in the degradation of xylan.</title>
        <authorList>
            <person name="Yang X."/>
            <person name="Shi P."/>
            <person name="Huang H."/>
            <person name="Luo H."/>
            <person name="Wang Y."/>
            <person name="Zhang W."/>
            <person name="Yao B."/>
        </authorList>
    </citation>
    <scope>NUCLEOTIDE SEQUENCE [MRNA]</scope>
    <scope>FUNCTION</scope>
    <scope>CATALYTIC ACTIVITY</scope>
    <scope>BIOPHYSICOCHEMICAL PROPERTIES</scope>
    <scope>SUBSTRATE SPECIFICITY</scope>
    <scope>ACTIVITY REGULATION</scope>
    <scope>SUBCELLULAR LOCATION</scope>
    <scope>BIOTECHNOLOGY</scope>
    <source>
        <strain>Y1</strain>
    </source>
</reference>
<gene>
    <name evidence="3" type="primary">XylL43A</name>
</gene>
<evidence type="ECO:0000250" key="1">
    <source>
        <dbReference type="UniProtKB" id="Q45071"/>
    </source>
</evidence>
<evidence type="ECO:0000269" key="2">
    <source>
    </source>
</evidence>
<evidence type="ECO:0000303" key="3">
    <source>
    </source>
</evidence>
<evidence type="ECO:0000305" key="4"/>
<sequence length="327" mass="37017">MAPLITNIYTADPSAHVFNGKLYIYPSHDRETDIQFNDNGDQYDMADYHVFSLDSLDPPSEVTDHGVVLKVEDIPWVSKQLWAPDAATKDGKYYLYFPARDKEGIFRIGVAVSDKPEGPFTPDPEPIKGSYSIDPAVFVDDDGSAYMYFGGLWGGQLQCYQKGNNIFDAEWSGPKEPSGSGAKALGPRVAKLTDDMRQFAEEVREIVILAPETGEPLAADDHDRRFFEAAWMHKYNGKYYFSYSTGDTHYLVYAVGDSPYGPFTYGGRILEPVLGWTTHHSIVEFQGRWWLFHHDCELSKGVDHLRSVKVKEIWYDKDGKIVTEKPE</sequence>
<comment type="function">
    <text evidence="2">Bifunctional beta-xylosidase/alpha-L-arabinosidases with a low level of xylanase activity (PubMed:24262572). Is most active on 4-nitrophenyl beta-D-xylopyranoside (pNPX) (defined as 100%), moderate on p-nitrophenyl-alpha-L-arabinofuranoside (pNPA) (23.7%), and weak on beechwood xylan (15.9%) and birchwood xylan (15.2%) (PubMed:24262572). Is able to attack xylooligosacchardies with degrees of polymerisation of 2-5, releasing the amounts of reducing sugars in the order of xylopentose &gt; xylotetraose &gt; xylotriose &gt; xylobiose, i.e. the rate of xylose released from xylooligosacchardies increased with the chain length (PubMed:24262572). No activity is detected in the presence of carboxymethyl cellulose-sodium (CMC-Na), sugar beet arabinan, AZCL-arabinan (debranched), 4-nitrophenyl a-D - galactopyranoside, 2-nitrophenyl beta-D-galactopyranoside, and 4-nitrophenyl alpha-D-glucopyranoside (PubMed:24262572).</text>
</comment>
<comment type="catalytic activity">
    <reaction evidence="2">
        <text>Hydrolysis of (1-&gt;4)-beta-D-xylans, to remove successive D-xylose residues from the non-reducing termini.</text>
        <dbReference type="EC" id="3.2.1.37"/>
    </reaction>
</comment>
<comment type="catalytic activity">
    <reaction evidence="2">
        <text>Hydrolysis of terminal non-reducing alpha-L-arabinofuranoside residues in alpha-L-arabinosides.</text>
        <dbReference type="EC" id="3.2.1.55"/>
    </reaction>
</comment>
<comment type="activity regulation">
    <text evidence="2">Activity is inhibited by Ag(+), Li(+), Pb(2+), Cu(2+), Cr(3+), Co(3+), Fe(3+), Ni(2+), Mg(2+), Zn(2+), EDTA and SDS; but not by Mn(2+), Ca(2+) and beta-mercaptoethanol.</text>
</comment>
<comment type="biophysicochemical properties">
    <kinetics>
        <KM evidence="2">12.2 mM for pNPX</KM>
        <Vmax evidence="2">203.8 umol/min/mg enzyme towards pNPX</Vmax>
    </kinetics>
    <phDependence>
        <text evidence="2">Optimum pH is 6.5.</text>
    </phDependence>
    <temperatureDependence>
        <text evidence="2">Optimum temperature is 50 degrees Celsius.</text>
    </temperatureDependence>
</comment>
<comment type="subcellular location">
    <subcellularLocation>
        <location evidence="2">Secreted</location>
    </subcellularLocation>
    <text evidence="2">Major portions of the total activity were found in the extracellular fractions of Xyl43A (&gt;90%) (PubMed:24262572). Xyl45A contains no signal sequence and should be a non-classical secretory protein (PubMed:24262572).</text>
</comment>
<comment type="biotechnology">
    <text evidence="2">Combining xylanase Xyn11A and xylosidases Xyl43A and/or Xyl43B leads to the release of reducing sugars as high as 1.29 folds of the sum of that released by each enzyme, which contributes to the formulation of optimised enzyme mixtures for the efficient hydrolysis of plant biomass.</text>
</comment>
<comment type="similarity">
    <text evidence="4">Belongs to the glycosyl hydrolase 43 family.</text>
</comment>
<keyword id="KW-0119">Carbohydrate metabolism</keyword>
<keyword id="KW-0326">Glycosidase</keyword>
<keyword id="KW-0378">Hydrolase</keyword>
<keyword id="KW-0624">Polysaccharide degradation</keyword>
<keyword id="KW-0964">Secreted</keyword>